<keyword id="KW-0007">Acetylation</keyword>
<keyword id="KW-0256">Endoplasmic reticulum</keyword>
<keyword id="KW-0931">ER-Golgi transport</keyword>
<keyword id="KW-0333">Golgi apparatus</keyword>
<keyword id="KW-0472">Membrane</keyword>
<keyword id="KW-0597">Phosphoprotein</keyword>
<keyword id="KW-0653">Protein transport</keyword>
<keyword id="KW-1185">Reference proteome</keyword>
<keyword id="KW-0677">Repeat</keyword>
<keyword id="KW-0735">Signal-anchor</keyword>
<keyword id="KW-0812">Transmembrane</keyword>
<keyword id="KW-1133">Transmembrane helix</keyword>
<keyword id="KW-0813">Transport</keyword>
<keyword id="KW-0853">WD repeat</keyword>
<organism>
    <name type="scientific">Arabidopsis thaliana</name>
    <name type="common">Mouse-ear cress</name>
    <dbReference type="NCBI Taxonomy" id="3702"/>
    <lineage>
        <taxon>Eukaryota</taxon>
        <taxon>Viridiplantae</taxon>
        <taxon>Streptophyta</taxon>
        <taxon>Embryophyta</taxon>
        <taxon>Tracheophyta</taxon>
        <taxon>Spermatophyta</taxon>
        <taxon>Magnoliopsida</taxon>
        <taxon>eudicotyledons</taxon>
        <taxon>Gunneridae</taxon>
        <taxon>Pentapetalae</taxon>
        <taxon>rosids</taxon>
        <taxon>malvids</taxon>
        <taxon>Brassicales</taxon>
        <taxon>Brassicaceae</taxon>
        <taxon>Camelineae</taxon>
        <taxon>Arabidopsis</taxon>
    </lineage>
</organism>
<gene>
    <name type="primary">STL2P</name>
    <name type="synonym">ST12P</name>
    <name type="ordered locus">At2g01470</name>
    <name type="ORF">F2I9.9</name>
</gene>
<sequence length="393" mass="42794">MANQSTETNQPSNMQTYGVPIYAADWIPEVDVRSKIIMDPEKSEDDDESSSSSSSSRSCIVLSGGGGEGRSGISNVILICRVDLNTNSLSEQPLGRLVVGSDLPYRMAVHPREGGLICALPNSCKLFHWEDIMSREDNQAGESEEVIKELRDVGQQLALAFNPEGSVLAAGAEDGTLRVFKWPSMNTLLNESQAHSSVKCLTFSESGQFLVSLGGPVCRVWDVNASAAVASLSKEKDEMFASCRFSVDSAGNEVLYIAANTERGGSIITCDTKLWKRKWSKPIKKNSISAFNVSADGKLLAIGTLEGDVLILESTRMQTIQVVKKAHLGLVTALTFSPDSRGLVSVSFDSRARLTMIEQKGDKPGVRWWLLVLLIVLLYVVAYYYMKAKGIIP</sequence>
<feature type="initiator methionine" description="Removed" evidence="8">
    <location>
        <position position="1"/>
    </location>
</feature>
<feature type="chain" id="PRO_0000051229" description="SEC12-like protein 2">
    <location>
        <begin position="2"/>
        <end position="393"/>
    </location>
</feature>
<feature type="topological domain" description="Cytoplasmic" evidence="2">
    <location>
        <begin position="2"/>
        <end position="367"/>
    </location>
</feature>
<feature type="transmembrane region" description="Helical; Signal-anchor for type II membrane protein" evidence="2">
    <location>
        <begin position="368"/>
        <end position="388"/>
    </location>
</feature>
<feature type="topological domain" description="Lumenal" evidence="2">
    <location>
        <begin position="389"/>
        <end position="393"/>
    </location>
</feature>
<feature type="repeat" description="WD 1">
    <location>
        <begin position="151"/>
        <end position="190"/>
    </location>
</feature>
<feature type="repeat" description="WD 2">
    <location>
        <begin position="193"/>
        <end position="231"/>
    </location>
</feature>
<feature type="repeat" description="WD 3">
    <location>
        <begin position="283"/>
        <end position="322"/>
    </location>
</feature>
<feature type="repeat" description="WD 4">
    <location>
        <begin position="326"/>
        <end position="367"/>
    </location>
</feature>
<feature type="region of interest" description="Disordered" evidence="3">
    <location>
        <begin position="41"/>
        <end position="67"/>
    </location>
</feature>
<feature type="modified residue" description="N-acetylalanine" evidence="8">
    <location>
        <position position="2"/>
    </location>
</feature>
<feature type="modified residue" description="Phosphoserine" evidence="7">
    <location>
        <position position="43"/>
    </location>
</feature>
<feature type="sequence conflict" description="In Ref. 1; AAA32871." evidence="6" ref="1">
    <original>V</original>
    <variation>I</variation>
    <location>
        <position position="322"/>
    </location>
</feature>
<protein>
    <recommendedName>
        <fullName>SEC12-like protein 2</fullName>
    </recommendedName>
</protein>
<reference key="1">
    <citation type="journal article" date="1992" name="EMBO J.">
        <title>Fission yeast and a plant have functional homologues of the Sar1 and Sec12 proteins involved in ER to Golgi traffic in budding yeast.</title>
        <authorList>
            <person name="d'Enfert C."/>
            <person name="Gensse M."/>
            <person name="Gaillardin C."/>
        </authorList>
    </citation>
    <scope>NUCLEOTIDE SEQUENCE [MRNA]</scope>
    <scope>FUNCTION</scope>
</reference>
<reference key="2">
    <citation type="journal article" date="1999" name="Nature">
        <title>Sequence and analysis of chromosome 2 of the plant Arabidopsis thaliana.</title>
        <authorList>
            <person name="Lin X."/>
            <person name="Kaul S."/>
            <person name="Rounsley S.D."/>
            <person name="Shea T.P."/>
            <person name="Benito M.-I."/>
            <person name="Town C.D."/>
            <person name="Fujii C.Y."/>
            <person name="Mason T.M."/>
            <person name="Bowman C.L."/>
            <person name="Barnstead M.E."/>
            <person name="Feldblyum T.V."/>
            <person name="Buell C.R."/>
            <person name="Ketchum K.A."/>
            <person name="Lee J.J."/>
            <person name="Ronning C.M."/>
            <person name="Koo H.L."/>
            <person name="Moffat K.S."/>
            <person name="Cronin L.A."/>
            <person name="Shen M."/>
            <person name="Pai G."/>
            <person name="Van Aken S."/>
            <person name="Umayam L."/>
            <person name="Tallon L.J."/>
            <person name="Gill J.E."/>
            <person name="Adams M.D."/>
            <person name="Carrera A.J."/>
            <person name="Creasy T.H."/>
            <person name="Goodman H.M."/>
            <person name="Somerville C.R."/>
            <person name="Copenhaver G.P."/>
            <person name="Preuss D."/>
            <person name="Nierman W.C."/>
            <person name="White O."/>
            <person name="Eisen J.A."/>
            <person name="Salzberg S.L."/>
            <person name="Fraser C.M."/>
            <person name="Venter J.C."/>
        </authorList>
    </citation>
    <scope>NUCLEOTIDE SEQUENCE [LARGE SCALE GENOMIC DNA]</scope>
    <source>
        <strain>cv. Columbia</strain>
    </source>
</reference>
<reference key="3">
    <citation type="journal article" date="2017" name="Plant J.">
        <title>Araport11: a complete reannotation of the Arabidopsis thaliana reference genome.</title>
        <authorList>
            <person name="Cheng C.Y."/>
            <person name="Krishnakumar V."/>
            <person name="Chan A.P."/>
            <person name="Thibaud-Nissen F."/>
            <person name="Schobel S."/>
            <person name="Town C.D."/>
        </authorList>
    </citation>
    <scope>GENOME REANNOTATION</scope>
    <source>
        <strain>cv. Columbia</strain>
    </source>
</reference>
<reference key="4">
    <citation type="journal article" date="2003" name="Science">
        <title>Empirical analysis of transcriptional activity in the Arabidopsis genome.</title>
        <authorList>
            <person name="Yamada K."/>
            <person name="Lim J."/>
            <person name="Dale J.M."/>
            <person name="Chen H."/>
            <person name="Shinn P."/>
            <person name="Palm C.J."/>
            <person name="Southwick A.M."/>
            <person name="Wu H.C."/>
            <person name="Kim C.J."/>
            <person name="Nguyen M."/>
            <person name="Pham P.K."/>
            <person name="Cheuk R.F."/>
            <person name="Karlin-Newmann G."/>
            <person name="Liu S.X."/>
            <person name="Lam B."/>
            <person name="Sakano H."/>
            <person name="Wu T."/>
            <person name="Yu G."/>
            <person name="Miranda M."/>
            <person name="Quach H.L."/>
            <person name="Tripp M."/>
            <person name="Chang C.H."/>
            <person name="Lee J.M."/>
            <person name="Toriumi M.J."/>
            <person name="Chan M.M."/>
            <person name="Tang C.C."/>
            <person name="Onodera C.S."/>
            <person name="Deng J.M."/>
            <person name="Akiyama K."/>
            <person name="Ansari Y."/>
            <person name="Arakawa T."/>
            <person name="Banh J."/>
            <person name="Banno F."/>
            <person name="Bowser L."/>
            <person name="Brooks S.Y."/>
            <person name="Carninci P."/>
            <person name="Chao Q."/>
            <person name="Choy N."/>
            <person name="Enju A."/>
            <person name="Goldsmith A.D."/>
            <person name="Gurjal M."/>
            <person name="Hansen N.F."/>
            <person name="Hayashizaki Y."/>
            <person name="Johnson-Hopson C."/>
            <person name="Hsuan V.W."/>
            <person name="Iida K."/>
            <person name="Karnes M."/>
            <person name="Khan S."/>
            <person name="Koesema E."/>
            <person name="Ishida J."/>
            <person name="Jiang P.X."/>
            <person name="Jones T."/>
            <person name="Kawai J."/>
            <person name="Kamiya A."/>
            <person name="Meyers C."/>
            <person name="Nakajima M."/>
            <person name="Narusaka M."/>
            <person name="Seki M."/>
            <person name="Sakurai T."/>
            <person name="Satou M."/>
            <person name="Tamse R."/>
            <person name="Vaysberg M."/>
            <person name="Wallender E.K."/>
            <person name="Wong C."/>
            <person name="Yamamura Y."/>
            <person name="Yuan S."/>
            <person name="Shinozaki K."/>
            <person name="Davis R.W."/>
            <person name="Theologis A."/>
            <person name="Ecker J.R."/>
        </authorList>
    </citation>
    <scope>NUCLEOTIDE SEQUENCE [LARGE SCALE MRNA]</scope>
    <source>
        <strain>cv. Columbia</strain>
    </source>
</reference>
<reference key="5">
    <citation type="journal article" date="2009" name="Plant Physiol.">
        <title>Large-scale Arabidopsis phosphoproteome profiling reveals novel chloroplast kinase substrates and phosphorylation networks.</title>
        <authorList>
            <person name="Reiland S."/>
            <person name="Messerli G."/>
            <person name="Baerenfaller K."/>
            <person name="Gerrits B."/>
            <person name="Endler A."/>
            <person name="Grossmann J."/>
            <person name="Gruissem W."/>
            <person name="Baginsky S."/>
        </authorList>
    </citation>
    <scope>PHOSPHORYLATION [LARGE SCALE ANALYSIS] AT SER-43</scope>
    <scope>IDENTIFICATION BY MASS SPECTROMETRY [LARGE SCALE ANALYSIS]</scope>
</reference>
<reference key="6">
    <citation type="journal article" date="2012" name="Mol. Cell. Proteomics">
        <title>Comparative large-scale characterisation of plant vs. mammal proteins reveals similar and idiosyncratic N-alpha acetylation features.</title>
        <authorList>
            <person name="Bienvenut W.V."/>
            <person name="Sumpton D."/>
            <person name="Martinez A."/>
            <person name="Lilla S."/>
            <person name="Espagne C."/>
            <person name="Meinnel T."/>
            <person name="Giglione C."/>
        </authorList>
    </citation>
    <scope>ACETYLATION [LARGE SCALE ANALYSIS] AT ALA-2</scope>
    <scope>CLEAVAGE OF INITIATOR METHIONINE [LARGE SCALE ANALYSIS]</scope>
    <scope>IDENTIFICATION BY MASS SPECTROMETRY [LARGE SCALE ANALYSIS]</scope>
</reference>
<reference key="7">
    <citation type="journal article" date="2012" name="Plant J.">
        <title>Elements proximal to and within the transmembrane domain mediate the organelle-to-organelle movement of bZIP28 under ER stress conditions.</title>
        <authorList>
            <person name="Srivastava R."/>
            <person name="Chen Y."/>
            <person name="Deng Y."/>
            <person name="Brandizzi F."/>
            <person name="Howell S.H."/>
        </authorList>
    </citation>
    <scope>INTERACTION WITH BZIP28</scope>
</reference>
<accession>Q39221</accession>
<accession>Q7EP29</accession>
<accession>Q8VZ72</accession>
<comment type="function">
    <text evidence="4">Required for the formation or budding of transport vesicles from the ER.</text>
</comment>
<comment type="subunit">
    <text evidence="5">Interacts with BZIP28.</text>
</comment>
<comment type="interaction">
    <interactant intactId="EBI-59034360">
        <id>Q39221</id>
    </interactant>
    <interactant intactId="EBI-2107143">
        <id>Q38997</id>
        <label>KIN10</label>
    </interactant>
    <organismsDiffer>false</organismsDiffer>
    <experiments>2</experiments>
</comment>
<comment type="subcellular location">
    <subcellularLocation>
        <location evidence="1">Endoplasmic reticulum membrane</location>
        <topology evidence="1">Single-pass membrane protein</topology>
    </subcellularLocation>
    <subcellularLocation>
        <location evidence="1">Golgi apparatus</location>
        <location evidence="1">cis-Golgi network membrane</location>
        <topology evidence="1">Single-pass membrane protein</topology>
    </subcellularLocation>
    <text evidence="1">Endoplasmic reticulum and the early Golgi.</text>
</comment>
<comment type="miscellaneous">
    <text evidence="1">In the process of transport, may migrate to the Golgi apparatus and function in subsequent transport events.</text>
</comment>
<evidence type="ECO:0000250" key="1"/>
<evidence type="ECO:0000255" key="2"/>
<evidence type="ECO:0000256" key="3">
    <source>
        <dbReference type="SAM" id="MobiDB-lite"/>
    </source>
</evidence>
<evidence type="ECO:0000269" key="4">
    <source>
    </source>
</evidence>
<evidence type="ECO:0000269" key="5">
    <source>
    </source>
</evidence>
<evidence type="ECO:0000305" key="6"/>
<evidence type="ECO:0007744" key="7">
    <source>
    </source>
</evidence>
<evidence type="ECO:0007744" key="8">
    <source>
    </source>
</evidence>
<name>STLP2_ARATH</name>
<proteinExistence type="evidence at protein level"/>
<dbReference type="EMBL" id="M95796">
    <property type="protein sequence ID" value="AAA32871.1"/>
    <property type="molecule type" value="mRNA"/>
</dbReference>
<dbReference type="EMBL" id="AC005560">
    <property type="protein sequence ID" value="AAC67323.1"/>
    <property type="molecule type" value="Genomic_DNA"/>
</dbReference>
<dbReference type="EMBL" id="CP002685">
    <property type="protein sequence ID" value="AEC05458.1"/>
    <property type="molecule type" value="Genomic_DNA"/>
</dbReference>
<dbReference type="EMBL" id="AY065198">
    <property type="protein sequence ID" value="AAL38374.1"/>
    <property type="molecule type" value="mRNA"/>
</dbReference>
<dbReference type="EMBL" id="AY074332">
    <property type="protein sequence ID" value="AAL67028.1"/>
    <property type="molecule type" value="mRNA"/>
</dbReference>
<dbReference type="EMBL" id="AY123030">
    <property type="protein sequence ID" value="AAM67563.1"/>
    <property type="molecule type" value="mRNA"/>
</dbReference>
<dbReference type="PIR" id="B84425">
    <property type="entry name" value="B84425"/>
</dbReference>
<dbReference type="PIR" id="S28604">
    <property type="entry name" value="S28604"/>
</dbReference>
<dbReference type="PIR" id="T48907">
    <property type="entry name" value="T48907"/>
</dbReference>
<dbReference type="RefSeq" id="NP_178256.1">
    <property type="nucleotide sequence ID" value="NM_126208.4"/>
</dbReference>
<dbReference type="SMR" id="Q39221"/>
<dbReference type="BioGRID" id="78">
    <property type="interactions" value="4"/>
</dbReference>
<dbReference type="FunCoup" id="Q39221">
    <property type="interactions" value="4556"/>
</dbReference>
<dbReference type="IntAct" id="Q39221">
    <property type="interactions" value="2"/>
</dbReference>
<dbReference type="STRING" id="3702.Q39221"/>
<dbReference type="iPTMnet" id="Q39221"/>
<dbReference type="MetOSite" id="Q39221"/>
<dbReference type="PaxDb" id="3702-AT2G01470.1"/>
<dbReference type="ProteomicsDB" id="245217"/>
<dbReference type="EnsemblPlants" id="AT2G01470.1">
    <property type="protein sequence ID" value="AT2G01470.1"/>
    <property type="gene ID" value="AT2G01470"/>
</dbReference>
<dbReference type="GeneID" id="814675"/>
<dbReference type="Gramene" id="AT2G01470.1">
    <property type="protein sequence ID" value="AT2G01470.1"/>
    <property type="gene ID" value="AT2G01470"/>
</dbReference>
<dbReference type="KEGG" id="ath:AT2G01470"/>
<dbReference type="Araport" id="AT2G01470"/>
<dbReference type="TAIR" id="AT2G01470">
    <property type="gene designation" value="STL2P"/>
</dbReference>
<dbReference type="eggNOG" id="KOG0771">
    <property type="taxonomic scope" value="Eukaryota"/>
</dbReference>
<dbReference type="HOGENOM" id="CLU_058136_0_0_1"/>
<dbReference type="InParanoid" id="Q39221"/>
<dbReference type="OMA" id="KAHEFPP"/>
<dbReference type="PhylomeDB" id="Q39221"/>
<dbReference type="CD-CODE" id="4299E36E">
    <property type="entry name" value="Nucleolus"/>
</dbReference>
<dbReference type="PRO" id="PR:Q39221"/>
<dbReference type="Proteomes" id="UP000006548">
    <property type="component" value="Chromosome 2"/>
</dbReference>
<dbReference type="ExpressionAtlas" id="Q39221">
    <property type="expression patterns" value="baseline and differential"/>
</dbReference>
<dbReference type="GO" id="GO:0005783">
    <property type="term" value="C:endoplasmic reticulum"/>
    <property type="evidence" value="ECO:0007005"/>
    <property type="project" value="TAIR"/>
</dbReference>
<dbReference type="GO" id="GO:0005789">
    <property type="term" value="C:endoplasmic reticulum membrane"/>
    <property type="evidence" value="ECO:0007669"/>
    <property type="project" value="UniProtKB-SubCell"/>
</dbReference>
<dbReference type="GO" id="GO:0005794">
    <property type="term" value="C:Golgi apparatus"/>
    <property type="evidence" value="ECO:0007669"/>
    <property type="project" value="UniProtKB-SubCell"/>
</dbReference>
<dbReference type="GO" id="GO:0005739">
    <property type="term" value="C:mitochondrion"/>
    <property type="evidence" value="ECO:0007005"/>
    <property type="project" value="TAIR"/>
</dbReference>
<dbReference type="GO" id="GO:0000325">
    <property type="term" value="C:plant-type vacuole"/>
    <property type="evidence" value="ECO:0007005"/>
    <property type="project" value="TAIR"/>
</dbReference>
<dbReference type="GO" id="GO:0005886">
    <property type="term" value="C:plasma membrane"/>
    <property type="evidence" value="ECO:0007005"/>
    <property type="project" value="TAIR"/>
</dbReference>
<dbReference type="GO" id="GO:0005085">
    <property type="term" value="F:guanyl-nucleotide exchange factor activity"/>
    <property type="evidence" value="ECO:0007669"/>
    <property type="project" value="InterPro"/>
</dbReference>
<dbReference type="GO" id="GO:0006888">
    <property type="term" value="P:endoplasmic reticulum to Golgi vesicle-mediated transport"/>
    <property type="evidence" value="ECO:0000304"/>
    <property type="project" value="TAIR"/>
</dbReference>
<dbReference type="GO" id="GO:0015031">
    <property type="term" value="P:protein transport"/>
    <property type="evidence" value="ECO:0007669"/>
    <property type="project" value="UniProtKB-KW"/>
</dbReference>
<dbReference type="FunFam" id="2.130.10.10:FF:000612">
    <property type="entry name" value="SEC12-like protein 2"/>
    <property type="match status" value="1"/>
</dbReference>
<dbReference type="Gene3D" id="2.130.10.10">
    <property type="entry name" value="YVTN repeat-like/Quinoprotein amine dehydrogenase"/>
    <property type="match status" value="1"/>
</dbReference>
<dbReference type="InterPro" id="IPR011047">
    <property type="entry name" value="Quinoprotein_ADH-like_sf"/>
</dbReference>
<dbReference type="InterPro" id="IPR045260">
    <property type="entry name" value="Sec12-like"/>
</dbReference>
<dbReference type="InterPro" id="IPR015943">
    <property type="entry name" value="WD40/YVTN_repeat-like_dom_sf"/>
</dbReference>
<dbReference type="InterPro" id="IPR001680">
    <property type="entry name" value="WD40_rpt"/>
</dbReference>
<dbReference type="PANTHER" id="PTHR23284">
    <property type="entry name" value="PROLACTIN REGULATORY ELEMENT BINDING PROTEIN"/>
    <property type="match status" value="1"/>
</dbReference>
<dbReference type="PANTHER" id="PTHR23284:SF0">
    <property type="entry name" value="PROLACTIN REGULATORY ELEMENT-BINDING PROTEIN"/>
    <property type="match status" value="1"/>
</dbReference>
<dbReference type="Pfam" id="PF00400">
    <property type="entry name" value="WD40"/>
    <property type="match status" value="3"/>
</dbReference>
<dbReference type="SMART" id="SM00320">
    <property type="entry name" value="WD40"/>
    <property type="match status" value="4"/>
</dbReference>
<dbReference type="SUPFAM" id="SSF50998">
    <property type="entry name" value="Quinoprotein alcohol dehydrogenase-like"/>
    <property type="match status" value="1"/>
</dbReference>
<dbReference type="PROSITE" id="PS50294">
    <property type="entry name" value="WD_REPEATS_REGION"/>
    <property type="match status" value="1"/>
</dbReference>